<gene>
    <name evidence="1" type="primary">rsmG</name>
    <name type="ordered locus">Ccur92_13590</name>
    <name type="ORF">CCV52592_1345</name>
</gene>
<comment type="function">
    <text evidence="1">Specifically methylates the N7 position of guanine in position 527 of 16S rRNA.</text>
</comment>
<comment type="catalytic activity">
    <reaction evidence="1">
        <text>guanosine(527) in 16S rRNA + S-adenosyl-L-methionine = N(7)-methylguanosine(527) in 16S rRNA + S-adenosyl-L-homocysteine</text>
        <dbReference type="Rhea" id="RHEA:42732"/>
        <dbReference type="Rhea" id="RHEA-COMP:10209"/>
        <dbReference type="Rhea" id="RHEA-COMP:10210"/>
        <dbReference type="ChEBI" id="CHEBI:57856"/>
        <dbReference type="ChEBI" id="CHEBI:59789"/>
        <dbReference type="ChEBI" id="CHEBI:74269"/>
        <dbReference type="ChEBI" id="CHEBI:74480"/>
        <dbReference type="EC" id="2.1.1.170"/>
    </reaction>
</comment>
<comment type="subcellular location">
    <subcellularLocation>
        <location evidence="1">Cytoplasm</location>
    </subcellularLocation>
</comment>
<comment type="similarity">
    <text evidence="1">Belongs to the methyltransferase superfamily. RNA methyltransferase RsmG family.</text>
</comment>
<keyword id="KW-0963">Cytoplasm</keyword>
<keyword id="KW-0489">Methyltransferase</keyword>
<keyword id="KW-1185">Reference proteome</keyword>
<keyword id="KW-0698">rRNA processing</keyword>
<keyword id="KW-0949">S-adenosyl-L-methionine</keyword>
<keyword id="KW-0808">Transferase</keyword>
<protein>
    <recommendedName>
        <fullName evidence="1">Ribosomal RNA small subunit methyltransferase G</fullName>
        <ecNumber evidence="1">2.1.1.170</ecNumber>
    </recommendedName>
    <alternativeName>
        <fullName evidence="1">16S rRNA 7-methylguanosine methyltransferase</fullName>
        <shortName evidence="1">16S rRNA m7G methyltransferase</shortName>
    </alternativeName>
</protein>
<name>RSMG_CAMC5</name>
<accession>A7GZM1</accession>
<feature type="chain" id="PRO_0000342907" description="Ribosomal RNA small subunit methyltransferase G">
    <location>
        <begin position="1"/>
        <end position="186"/>
    </location>
</feature>
<feature type="binding site" evidence="1">
    <location>
        <position position="59"/>
    </location>
    <ligand>
        <name>S-adenosyl-L-methionine</name>
        <dbReference type="ChEBI" id="CHEBI:59789"/>
    </ligand>
</feature>
<feature type="binding site" evidence="1">
    <location>
        <position position="64"/>
    </location>
    <ligand>
        <name>S-adenosyl-L-methionine</name>
        <dbReference type="ChEBI" id="CHEBI:59789"/>
    </ligand>
</feature>
<feature type="binding site" evidence="1">
    <location>
        <begin position="110"/>
        <end position="111"/>
    </location>
    <ligand>
        <name>S-adenosyl-L-methionine</name>
        <dbReference type="ChEBI" id="CHEBI:59789"/>
    </ligand>
</feature>
<feature type="binding site" evidence="1">
    <location>
        <position position="124"/>
    </location>
    <ligand>
        <name>S-adenosyl-L-methionine</name>
        <dbReference type="ChEBI" id="CHEBI:59789"/>
    </ligand>
</feature>
<dbReference type="EC" id="2.1.1.170" evidence="1"/>
<dbReference type="EMBL" id="CP000767">
    <property type="protein sequence ID" value="EAT99461.1"/>
    <property type="molecule type" value="Genomic_DNA"/>
</dbReference>
<dbReference type="RefSeq" id="WP_009650527.1">
    <property type="nucleotide sequence ID" value="NC_009715.2"/>
</dbReference>
<dbReference type="SMR" id="A7GZM1"/>
<dbReference type="STRING" id="360105.CCV52592_1345"/>
<dbReference type="KEGG" id="ccv:CCV52592_1345"/>
<dbReference type="HOGENOM" id="CLU_065341_2_1_7"/>
<dbReference type="OrthoDB" id="9808773at2"/>
<dbReference type="Proteomes" id="UP000006380">
    <property type="component" value="Chromosome"/>
</dbReference>
<dbReference type="GO" id="GO:0005829">
    <property type="term" value="C:cytosol"/>
    <property type="evidence" value="ECO:0007669"/>
    <property type="project" value="TreeGrafter"/>
</dbReference>
<dbReference type="GO" id="GO:0070043">
    <property type="term" value="F:rRNA (guanine-N7-)-methyltransferase activity"/>
    <property type="evidence" value="ECO:0007669"/>
    <property type="project" value="UniProtKB-UniRule"/>
</dbReference>
<dbReference type="Gene3D" id="3.40.50.150">
    <property type="entry name" value="Vaccinia Virus protein VP39"/>
    <property type="match status" value="1"/>
</dbReference>
<dbReference type="HAMAP" id="MF_00074">
    <property type="entry name" value="16SrRNA_methyltr_G"/>
    <property type="match status" value="1"/>
</dbReference>
<dbReference type="InterPro" id="IPR003682">
    <property type="entry name" value="rRNA_ssu_MeTfrase_G"/>
</dbReference>
<dbReference type="InterPro" id="IPR029063">
    <property type="entry name" value="SAM-dependent_MTases_sf"/>
</dbReference>
<dbReference type="NCBIfam" id="TIGR00138">
    <property type="entry name" value="rsmG_gidB"/>
    <property type="match status" value="1"/>
</dbReference>
<dbReference type="PANTHER" id="PTHR31760">
    <property type="entry name" value="S-ADENOSYL-L-METHIONINE-DEPENDENT METHYLTRANSFERASES SUPERFAMILY PROTEIN"/>
    <property type="match status" value="1"/>
</dbReference>
<dbReference type="PANTHER" id="PTHR31760:SF0">
    <property type="entry name" value="S-ADENOSYL-L-METHIONINE-DEPENDENT METHYLTRANSFERASES SUPERFAMILY PROTEIN"/>
    <property type="match status" value="1"/>
</dbReference>
<dbReference type="Pfam" id="PF02527">
    <property type="entry name" value="GidB"/>
    <property type="match status" value="1"/>
</dbReference>
<dbReference type="PIRSF" id="PIRSF003078">
    <property type="entry name" value="GidB"/>
    <property type="match status" value="1"/>
</dbReference>
<dbReference type="SUPFAM" id="SSF53335">
    <property type="entry name" value="S-adenosyl-L-methionine-dependent methyltransferases"/>
    <property type="match status" value="1"/>
</dbReference>
<reference key="1">
    <citation type="submission" date="2007-07" db="EMBL/GenBank/DDBJ databases">
        <title>Genome sequence of Campylobacter curvus 525.92 isolated from human feces.</title>
        <authorList>
            <person name="Fouts D.E."/>
            <person name="Mongodin E.F."/>
            <person name="Puiu D."/>
            <person name="Sebastian Y."/>
            <person name="Miller W.G."/>
            <person name="Mandrell R.E."/>
            <person name="Lastovica A.J."/>
            <person name="Nelson K.E."/>
        </authorList>
    </citation>
    <scope>NUCLEOTIDE SEQUENCE [LARGE SCALE GENOMIC DNA]</scope>
    <source>
        <strain>525.92</strain>
    </source>
</reference>
<organism>
    <name type="scientific">Campylobacter curvus (strain 525.92)</name>
    <dbReference type="NCBI Taxonomy" id="360105"/>
    <lineage>
        <taxon>Bacteria</taxon>
        <taxon>Pseudomonadati</taxon>
        <taxon>Campylobacterota</taxon>
        <taxon>Epsilonproteobacteria</taxon>
        <taxon>Campylobacterales</taxon>
        <taxon>Campylobacteraceae</taxon>
        <taxon>Campylobacter</taxon>
    </lineage>
</organism>
<evidence type="ECO:0000255" key="1">
    <source>
        <dbReference type="HAMAP-Rule" id="MF_00074"/>
    </source>
</evidence>
<sequence length="186" mass="21373">MIEIPSDFSEQTAKFTQILAKFNRVHSLTNYKNFDEQISDSISPLKWLKFYPETAIDVGSGAGFPAIFLAMILKDCRWWLFEPNAKKSSFLSYVKAELNLKNVSVKSCKIEACEPFVAQLITSRALMKTKELLKICRGFYDNETQILLYKGSSVEGELDGLDAQIYGVKNRNYVFLNVKRDWKENE</sequence>
<proteinExistence type="inferred from homology"/>